<comment type="function">
    <text evidence="1">Transcriptional coactivator that stimulates GCN4-dependent transcriptional activity by bridging the DNA-binding region of GCN4 and TBP (SPT15), thereby recruiting TBP to GCN4-bound promoters. Involved in induction of the ribosome quality control (RQC) pathway; a pathway that degrades nascent peptide chains during problematic translation. Required to prevent stalled ribosomes from frameshifting.</text>
</comment>
<comment type="similarity">
    <text evidence="4">Belongs to the MBF1 family.</text>
</comment>
<organism>
    <name type="scientific">Pyricularia oryzae (strain 70-15 / ATCC MYA-4617 / FGSC 8958)</name>
    <name type="common">Rice blast fungus</name>
    <name type="synonym">Magnaporthe oryzae</name>
    <dbReference type="NCBI Taxonomy" id="242507"/>
    <lineage>
        <taxon>Eukaryota</taxon>
        <taxon>Fungi</taxon>
        <taxon>Dikarya</taxon>
        <taxon>Ascomycota</taxon>
        <taxon>Pezizomycotina</taxon>
        <taxon>Sordariomycetes</taxon>
        <taxon>Sordariomycetidae</taxon>
        <taxon>Magnaporthales</taxon>
        <taxon>Pyriculariaceae</taxon>
        <taxon>Pyricularia</taxon>
    </lineage>
</organism>
<gene>
    <name type="primary">MBF1</name>
    <name type="ORF">MGG_08203</name>
</gene>
<accession>Q52BY4</accession>
<accession>A4RHC0</accession>
<accession>G4MZA2</accession>
<evidence type="ECO:0000250" key="1">
    <source>
        <dbReference type="UniProtKB" id="O14467"/>
    </source>
</evidence>
<evidence type="ECO:0000255" key="2"/>
<evidence type="ECO:0000256" key="3">
    <source>
        <dbReference type="SAM" id="MobiDB-lite"/>
    </source>
</evidence>
<evidence type="ECO:0000305" key="4"/>
<keyword id="KW-0010">Activator</keyword>
<keyword id="KW-0238">DNA-binding</keyword>
<keyword id="KW-1185">Reference proteome</keyword>
<keyword id="KW-0804">Transcription</keyword>
<keyword id="KW-0805">Transcription regulation</keyword>
<reference key="1">
    <citation type="journal article" date="2005" name="Nature">
        <title>The genome sequence of the rice blast fungus Magnaporthe grisea.</title>
        <authorList>
            <person name="Dean R.A."/>
            <person name="Talbot N.J."/>
            <person name="Ebbole D.J."/>
            <person name="Farman M.L."/>
            <person name="Mitchell T.K."/>
            <person name="Orbach M.J."/>
            <person name="Thon M.R."/>
            <person name="Kulkarni R."/>
            <person name="Xu J.-R."/>
            <person name="Pan H."/>
            <person name="Read N.D."/>
            <person name="Lee Y.-H."/>
            <person name="Carbone I."/>
            <person name="Brown D."/>
            <person name="Oh Y.Y."/>
            <person name="Donofrio N."/>
            <person name="Jeong J.S."/>
            <person name="Soanes D.M."/>
            <person name="Djonovic S."/>
            <person name="Kolomiets E."/>
            <person name="Rehmeyer C."/>
            <person name="Li W."/>
            <person name="Harding M."/>
            <person name="Kim S."/>
            <person name="Lebrun M.-H."/>
            <person name="Bohnert H."/>
            <person name="Coughlan S."/>
            <person name="Butler J."/>
            <person name="Calvo S.E."/>
            <person name="Ma L.-J."/>
            <person name="Nicol R."/>
            <person name="Purcell S."/>
            <person name="Nusbaum C."/>
            <person name="Galagan J.E."/>
            <person name="Birren B.W."/>
        </authorList>
    </citation>
    <scope>NUCLEOTIDE SEQUENCE [LARGE SCALE GENOMIC DNA]</scope>
    <source>
        <strain>70-15 / ATCC MYA-4617 / FGSC 8958</strain>
    </source>
</reference>
<feature type="chain" id="PRO_0000149810" description="Multiprotein-bridging factor 1">
    <location>
        <begin position="1"/>
        <end position="161"/>
    </location>
</feature>
<feature type="domain" description="HTH cro/C1-type">
    <location>
        <begin position="90"/>
        <end position="144"/>
    </location>
</feature>
<feature type="DNA-binding region" description="H-T-H motif" evidence="2">
    <location>
        <begin position="101"/>
        <end position="120"/>
    </location>
</feature>
<feature type="region of interest" description="Disordered" evidence="3">
    <location>
        <begin position="1"/>
        <end position="66"/>
    </location>
</feature>
<feature type="compositionally biased region" description="Gly residues" evidence="3">
    <location>
        <begin position="14"/>
        <end position="23"/>
    </location>
</feature>
<feature type="compositionally biased region" description="Polar residues" evidence="3">
    <location>
        <begin position="27"/>
        <end position="36"/>
    </location>
</feature>
<feature type="compositionally biased region" description="Polar residues" evidence="3">
    <location>
        <begin position="52"/>
        <end position="65"/>
    </location>
</feature>
<sequence length="161" mass="17594">MADDWDTVTKIGSRVGGGGGGGPRLTTIKNKSQLNAAQRAGGIVGTEKKYGTANSSRSEAGSGQFLTKVDRSDDIVKPKTGDKELGMYIMQNREQKKLGNRLEFGKKVGINEKDLARIEKGEVPITQDQVNRIERGLEMFIRGVKKGEPKVKTFKRAADKK</sequence>
<proteinExistence type="inferred from homology"/>
<dbReference type="EMBL" id="CM001232">
    <property type="protein sequence ID" value="EHA55375.1"/>
    <property type="molecule type" value="Genomic_DNA"/>
</dbReference>
<dbReference type="RefSeq" id="XP_003715182.1">
    <property type="nucleotide sequence ID" value="XM_003715134.1"/>
</dbReference>
<dbReference type="SMR" id="Q52BY4"/>
<dbReference type="FunCoup" id="Q52BY4">
    <property type="interactions" value="752"/>
</dbReference>
<dbReference type="STRING" id="242507.Q52BY4"/>
<dbReference type="EnsemblFungi" id="MGG_08203T0">
    <property type="protein sequence ID" value="MGG_08203T0"/>
    <property type="gene ID" value="MGG_08203"/>
</dbReference>
<dbReference type="GeneID" id="2678438"/>
<dbReference type="KEGG" id="mgr:MGG_08203"/>
<dbReference type="VEuPathDB" id="FungiDB:MGG_08203"/>
<dbReference type="eggNOG" id="KOG3398">
    <property type="taxonomic scope" value="Eukaryota"/>
</dbReference>
<dbReference type="HOGENOM" id="CLU_112609_0_0_1"/>
<dbReference type="InParanoid" id="Q52BY4"/>
<dbReference type="OMA" id="KAVPNQM"/>
<dbReference type="OrthoDB" id="10253401at2759"/>
<dbReference type="PHI-base" id="PHI:6675"/>
<dbReference type="Proteomes" id="UP000009058">
    <property type="component" value="Chromosome 2"/>
</dbReference>
<dbReference type="GO" id="GO:0005634">
    <property type="term" value="C:nucleus"/>
    <property type="evidence" value="ECO:0007669"/>
    <property type="project" value="TreeGrafter"/>
</dbReference>
<dbReference type="GO" id="GO:0003677">
    <property type="term" value="F:DNA binding"/>
    <property type="evidence" value="ECO:0007669"/>
    <property type="project" value="UniProtKB-KW"/>
</dbReference>
<dbReference type="CDD" id="cd00093">
    <property type="entry name" value="HTH_XRE"/>
    <property type="match status" value="1"/>
</dbReference>
<dbReference type="Gene3D" id="1.10.260.40">
    <property type="entry name" value="lambda repressor-like DNA-binding domains"/>
    <property type="match status" value="1"/>
</dbReference>
<dbReference type="InterPro" id="IPR001387">
    <property type="entry name" value="Cro/C1-type_HTH"/>
</dbReference>
<dbReference type="InterPro" id="IPR010982">
    <property type="entry name" value="Lambda_DNA-bd_dom_sf"/>
</dbReference>
<dbReference type="InterPro" id="IPR013729">
    <property type="entry name" value="MBF1_N"/>
</dbReference>
<dbReference type="PANTHER" id="PTHR10245:SF15">
    <property type="entry name" value="ENDOTHELIAL DIFFERENTIATION-RELATED FACTOR 1"/>
    <property type="match status" value="1"/>
</dbReference>
<dbReference type="PANTHER" id="PTHR10245">
    <property type="entry name" value="ENDOTHELIAL DIFFERENTIATION-RELATED FACTOR 1 MULTIPROTEIN BRIDGING FACTOR 1"/>
    <property type="match status" value="1"/>
</dbReference>
<dbReference type="Pfam" id="PF08523">
    <property type="entry name" value="MBF1"/>
    <property type="match status" value="1"/>
</dbReference>
<protein>
    <recommendedName>
        <fullName>Multiprotein-bridging factor 1</fullName>
    </recommendedName>
</protein>
<name>MBF1_PYRO7</name>